<name>DKSA_CAUVC</name>
<protein>
    <recommendedName>
        <fullName evidence="1">RNA polymerase-binding transcription factor DksA</fullName>
    </recommendedName>
</protein>
<feature type="chain" id="PRO_0000187545" description="RNA polymerase-binding transcription factor DksA">
    <location>
        <begin position="1"/>
        <end position="142"/>
    </location>
</feature>
<feature type="zinc finger region" description="dksA C4-type" evidence="1">
    <location>
        <begin position="104"/>
        <end position="128"/>
    </location>
</feature>
<feature type="region of interest" description="Disordered" evidence="2">
    <location>
        <begin position="1"/>
        <end position="20"/>
    </location>
</feature>
<feature type="region of interest" description="Disordered" evidence="2">
    <location>
        <begin position="51"/>
        <end position="70"/>
    </location>
</feature>
<feature type="region of interest" description="Disordered" evidence="2">
    <location>
        <begin position="119"/>
        <end position="142"/>
    </location>
</feature>
<feature type="compositionally biased region" description="Basic and acidic residues" evidence="2">
    <location>
        <begin position="128"/>
        <end position="142"/>
    </location>
</feature>
<comment type="function">
    <text evidence="1">Transcription factor that acts by binding directly to the RNA polymerase (RNAP). Required for negative regulation of rRNA expression and positive regulation of several amino acid biosynthesis promoters.</text>
</comment>
<comment type="subunit">
    <text evidence="1">Interacts directly with the RNA polymerase.</text>
</comment>
<comment type="subcellular location">
    <subcellularLocation>
        <location evidence="1">Cytoplasm</location>
    </subcellularLocation>
</comment>
<comment type="similarity">
    <text evidence="1">Belongs to the DksA family.</text>
</comment>
<keyword id="KW-0963">Cytoplasm</keyword>
<keyword id="KW-0479">Metal-binding</keyword>
<keyword id="KW-1185">Reference proteome</keyword>
<keyword id="KW-0862">Zinc</keyword>
<keyword id="KW-0863">Zinc-finger</keyword>
<gene>
    <name evidence="1" type="primary">dksA</name>
    <name type="ordered locus">CC_2580</name>
</gene>
<evidence type="ECO:0000255" key="1">
    <source>
        <dbReference type="HAMAP-Rule" id="MF_00926"/>
    </source>
</evidence>
<evidence type="ECO:0000256" key="2">
    <source>
        <dbReference type="SAM" id="MobiDB-lite"/>
    </source>
</evidence>
<proteinExistence type="inferred from homology"/>
<dbReference type="EMBL" id="AE005673">
    <property type="protein sequence ID" value="AAK24550.1"/>
    <property type="molecule type" value="Genomic_DNA"/>
</dbReference>
<dbReference type="EMBL" id="M91448">
    <property type="protein sequence ID" value="AAB83954.1"/>
    <property type="molecule type" value="Genomic_DNA"/>
</dbReference>
<dbReference type="PIR" id="B87569">
    <property type="entry name" value="B87569"/>
</dbReference>
<dbReference type="RefSeq" id="NP_421382.1">
    <property type="nucleotide sequence ID" value="NC_002696.2"/>
</dbReference>
<dbReference type="RefSeq" id="WP_010920436.1">
    <property type="nucleotide sequence ID" value="NC_002696.2"/>
</dbReference>
<dbReference type="SMR" id="P0CAU3"/>
<dbReference type="STRING" id="190650.CC_2580"/>
<dbReference type="EnsemblBacteria" id="AAK24550">
    <property type="protein sequence ID" value="AAK24550"/>
    <property type="gene ID" value="CC_2580"/>
</dbReference>
<dbReference type="KEGG" id="ccr:CC_2580"/>
<dbReference type="PATRIC" id="fig|190650.5.peg.2594"/>
<dbReference type="eggNOG" id="COG1734">
    <property type="taxonomic scope" value="Bacteria"/>
</dbReference>
<dbReference type="HOGENOM" id="CLU_043144_2_2_5"/>
<dbReference type="BioCyc" id="CAULO:CC2580-MONOMER"/>
<dbReference type="Proteomes" id="UP000001816">
    <property type="component" value="Chromosome"/>
</dbReference>
<dbReference type="GO" id="GO:0005737">
    <property type="term" value="C:cytoplasm"/>
    <property type="evidence" value="ECO:0007669"/>
    <property type="project" value="UniProtKB-SubCell"/>
</dbReference>
<dbReference type="GO" id="GO:0008270">
    <property type="term" value="F:zinc ion binding"/>
    <property type="evidence" value="ECO:0007669"/>
    <property type="project" value="UniProtKB-UniRule"/>
</dbReference>
<dbReference type="GO" id="GO:0010468">
    <property type="term" value="P:regulation of gene expression"/>
    <property type="evidence" value="ECO:0007669"/>
    <property type="project" value="UniProtKB-UniRule"/>
</dbReference>
<dbReference type="Gene3D" id="1.20.120.910">
    <property type="entry name" value="DksA, coiled-coil domain"/>
    <property type="match status" value="1"/>
</dbReference>
<dbReference type="HAMAP" id="MF_00926">
    <property type="entry name" value="DksA"/>
    <property type="match status" value="1"/>
</dbReference>
<dbReference type="InterPro" id="IPR048489">
    <property type="entry name" value="DksA_N"/>
</dbReference>
<dbReference type="InterPro" id="IPR012784">
    <property type="entry name" value="DksA_RNA_pol-bd"/>
</dbReference>
<dbReference type="InterPro" id="IPR037187">
    <property type="entry name" value="DnaK_N"/>
</dbReference>
<dbReference type="InterPro" id="IPR000962">
    <property type="entry name" value="Znf_DskA_TraR"/>
</dbReference>
<dbReference type="InterPro" id="IPR020458">
    <property type="entry name" value="Znf_DskA_TraR_CS"/>
</dbReference>
<dbReference type="NCBIfam" id="TIGR02420">
    <property type="entry name" value="dksA"/>
    <property type="match status" value="1"/>
</dbReference>
<dbReference type="PANTHER" id="PTHR33823:SF2">
    <property type="entry name" value="RNA POLYMERASE-BINDING TRANSCRIPTION FACTOR DKSA"/>
    <property type="match status" value="1"/>
</dbReference>
<dbReference type="PANTHER" id="PTHR33823">
    <property type="entry name" value="RNA POLYMERASE-BINDING TRANSCRIPTION FACTOR DKSA-RELATED"/>
    <property type="match status" value="1"/>
</dbReference>
<dbReference type="Pfam" id="PF21157">
    <property type="entry name" value="DksA_N"/>
    <property type="match status" value="1"/>
</dbReference>
<dbReference type="Pfam" id="PF01258">
    <property type="entry name" value="zf-dskA_traR"/>
    <property type="match status" value="1"/>
</dbReference>
<dbReference type="SUPFAM" id="SSF109635">
    <property type="entry name" value="DnaK suppressor protein DksA, alpha-hairpin domain"/>
    <property type="match status" value="1"/>
</dbReference>
<dbReference type="SUPFAM" id="SSF57716">
    <property type="entry name" value="Glucocorticoid receptor-like (DNA-binding domain)"/>
    <property type="match status" value="1"/>
</dbReference>
<dbReference type="PROSITE" id="PS01102">
    <property type="entry name" value="ZF_DKSA_1"/>
    <property type="match status" value="1"/>
</dbReference>
<dbReference type="PROSITE" id="PS51128">
    <property type="entry name" value="ZF_DKSA_2"/>
    <property type="match status" value="1"/>
</dbReference>
<reference key="1">
    <citation type="journal article" date="2001" name="Proc. Natl. Acad. Sci. U.S.A.">
        <title>Complete genome sequence of Caulobacter crescentus.</title>
        <authorList>
            <person name="Nierman W.C."/>
            <person name="Feldblyum T.V."/>
            <person name="Laub M.T."/>
            <person name="Paulsen I.T."/>
            <person name="Nelson K.E."/>
            <person name="Eisen J.A."/>
            <person name="Heidelberg J.F."/>
            <person name="Alley M.R.K."/>
            <person name="Ohta N."/>
            <person name="Maddock J.R."/>
            <person name="Potocka I."/>
            <person name="Nelson W.C."/>
            <person name="Newton A."/>
            <person name="Stephens C."/>
            <person name="Phadke N.D."/>
            <person name="Ely B."/>
            <person name="DeBoy R.T."/>
            <person name="Dodson R.J."/>
            <person name="Durkin A.S."/>
            <person name="Gwinn M.L."/>
            <person name="Haft D.H."/>
            <person name="Kolonay J.F."/>
            <person name="Smit J."/>
            <person name="Craven M.B."/>
            <person name="Khouri H.M."/>
            <person name="Shetty J."/>
            <person name="Berry K.J."/>
            <person name="Utterback T.R."/>
            <person name="Tran K."/>
            <person name="Wolf A.M."/>
            <person name="Vamathevan J.J."/>
            <person name="Ermolaeva M.D."/>
            <person name="White O."/>
            <person name="Salzberg S.L."/>
            <person name="Venter J.C."/>
            <person name="Shapiro L."/>
            <person name="Fraser C.M."/>
        </authorList>
    </citation>
    <scope>NUCLEOTIDE SEQUENCE [LARGE SCALE GENOMIC DNA]</scope>
    <source>
        <strain>ATCC 19089 / CIP 103742 / CB 15</strain>
    </source>
</reference>
<reference key="2">
    <citation type="submission" date="1997-11" db="EMBL/GenBank/DDBJ databases">
        <authorList>
            <person name="Ely B."/>
        </authorList>
    </citation>
    <scope>NUCLEOTIDE SEQUENCE [GENOMIC DNA] OF 1-76</scope>
    <source>
        <strain>ATCC 19089 / CIP 103742 / CB 15</strain>
    </source>
</reference>
<sequence length="142" mass="16775">MQTATVLVEKSDYRPSEDEPFMNDRQLEYFKQKLLAWKEEILRESRETVSHLQKETENHADLADRASSETDRALELRTRDRQRKLISKIDQALRRVEDGSYGYCEETGEPIGLARLEARPTATMSVEAQERHERRERVHRDD</sequence>
<accession>P0CAU3</accession>
<accession>O32347</accession>
<organism>
    <name type="scientific">Caulobacter vibrioides (strain ATCC 19089 / CIP 103742 / CB 15)</name>
    <name type="common">Caulobacter crescentus</name>
    <dbReference type="NCBI Taxonomy" id="190650"/>
    <lineage>
        <taxon>Bacteria</taxon>
        <taxon>Pseudomonadati</taxon>
        <taxon>Pseudomonadota</taxon>
        <taxon>Alphaproteobacteria</taxon>
        <taxon>Caulobacterales</taxon>
        <taxon>Caulobacteraceae</taxon>
        <taxon>Caulobacter</taxon>
    </lineage>
</organism>